<sequence length="514" mass="59644">MKTLLVLRISTVILVVLVIQKSYADILECDYFDTVDISAAQKLQNGSYLFEGLLVPAILTGEYDFRILPDDSKQKVARHIRGCVCKLKPCVRFCCPHDHIMDNGVCYDNMSDEELAELDPFLNVTLDDGSVSRRHFKNELIVQWDLPMPCDGMFYLDNREEQDKYTLFENGTFFRHFDRVTLRKREYCLQHLTFADGNATSIRIAPHNCLIVPSITGQTVVMISSLICMVLTIAVYLFVKKLQNLHGKCFICYMVCLFMGYLFLLLDLWQISISFCKPAGFLGYFFVMAAFFWLSVISLHLWNTFRGSSHKANRFLFEHRFLAYNTYAWGMAVVLTGITVLADNIVENQDWNPRVGHEGHCWIYTQAWSAMLYFYGPMVFLIAFNITMFILTAKRILGVKKDIQNFAHRQERKQKLNSDKQTYTFFLRLFIIMGLSWSLEIGSYFSQSNQTWANVFLVADYLNWSQGIIIFILFVLKRSTWRLLQESIRGEGEEVNNSEEEISLENTTTRNVLL</sequence>
<protein>
    <recommendedName>
        <fullName>G-protein coupled receptor Mth</fullName>
    </recommendedName>
    <alternativeName>
        <fullName>Protein methuselah</fullName>
    </alternativeName>
</protein>
<comment type="function">
    <text evidence="4 5 7 8">Involved in biological aging and stress response. Essential for adult survival. Required in the presynaptic motor neuron to up-regulate neurotransmitter exocytosis at larval glutamatergic neuromuscular junctions (NMJs). Regulates a step associated with docking and clustering of vesicles at release sites. SP/Acp70A and sun are agonists that activate mth in vitro.</text>
</comment>
<comment type="subunit">
    <text evidence="6">Homodimer.</text>
</comment>
<comment type="subcellular location">
    <subcellularLocation>
        <location evidence="4">Cell membrane</location>
        <topology evidence="4">Multi-pass membrane protein</topology>
    </subcellularLocation>
    <text>Plasma membrane of presynaptic terminals and innervating axons.</text>
</comment>
<comment type="alternative products">
    <event type="alternative splicing"/>
    <isoform>
        <id>O97148-1</id>
        <name>A</name>
        <sequence type="displayed"/>
    </isoform>
    <isoform>
        <id>O97148-2</id>
        <name>B</name>
        <sequence type="described" ref="VSP_002023"/>
    </isoform>
</comment>
<comment type="disruption phenotype">
    <text evidence="8">Increase in average life-span and enhanced resistance to various forms of stress, including starvation, high temperature and dietary paraquat, a free-radical generator.</text>
</comment>
<comment type="miscellaneous">
    <text evidence="7">Agonists of mth share minimal sequence homology, suggesting a remarkable promiscuity of mth for activation.</text>
</comment>
<comment type="similarity">
    <text evidence="11">Belongs to the G-protein coupled receptor 2 family. Mth subfamily.</text>
</comment>
<comment type="sequence caution" evidence="11">
    <conflict type="erroneous gene model prediction">
        <sequence resource="EMBL-CDS" id="AAG22708"/>
    </conflict>
</comment>
<comment type="sequence caution" evidence="11">
    <conflict type="erroneous gene model prediction">
        <sequence resource="EMBL-CDS" id="AAG22709"/>
    </conflict>
</comment>
<comment type="sequence caution" evidence="11">
    <conflict type="erroneous gene model prediction">
        <sequence resource="EMBL-CDS" id="AAG22710"/>
    </conflict>
</comment>
<comment type="sequence caution" evidence="11">
    <conflict type="erroneous gene model prediction">
        <sequence resource="EMBL-CDS" id="AAG22711"/>
    </conflict>
</comment>
<comment type="sequence caution" evidence="11">
    <conflict type="erroneous gene model prediction">
        <sequence resource="EMBL-CDS" id="AAG22712"/>
    </conflict>
</comment>
<comment type="sequence caution" evidence="11">
    <conflict type="erroneous gene model prediction">
        <sequence resource="EMBL-CDS" id="AAG22713"/>
    </conflict>
</comment>
<comment type="sequence caution" evidence="11">
    <conflict type="erroneous gene model prediction">
        <sequence resource="EMBL-CDS" id="AAG22714"/>
    </conflict>
</comment>
<comment type="sequence caution" evidence="11">
    <conflict type="erroneous gene model prediction">
        <sequence resource="EMBL-CDS" id="AAG22715"/>
    </conflict>
</comment>
<comment type="sequence caution" evidence="11">
    <conflict type="erroneous gene model prediction">
        <sequence resource="EMBL-CDS" id="AAG22716"/>
    </conflict>
</comment>
<comment type="sequence caution" evidence="11">
    <conflict type="erroneous gene model prediction">
        <sequence resource="EMBL-CDS" id="AAG22717"/>
    </conflict>
</comment>
<comment type="sequence caution" evidence="11">
    <conflict type="erroneous gene model prediction">
        <sequence resource="EMBL-CDS" id="AAG22718"/>
    </conflict>
</comment>
<comment type="sequence caution" evidence="11">
    <conflict type="erroneous gene model prediction">
        <sequence resource="EMBL-CDS" id="AAG22719"/>
    </conflict>
</comment>
<comment type="sequence caution" evidence="11">
    <conflict type="erroneous gene model prediction">
        <sequence resource="EMBL-CDS" id="AAG22720"/>
    </conflict>
</comment>
<comment type="sequence caution" evidence="11">
    <conflict type="erroneous gene model prediction">
        <sequence resource="EMBL-CDS" id="AAG22721"/>
    </conflict>
</comment>
<comment type="sequence caution" evidence="11">
    <conflict type="erroneous gene model prediction">
        <sequence resource="EMBL-CDS" id="AAG22722"/>
    </conflict>
</comment>
<comment type="sequence caution" evidence="11">
    <conflict type="erroneous gene model prediction">
        <sequence resource="EMBL-CDS" id="AAG22723"/>
    </conflict>
</comment>
<comment type="sequence caution" evidence="11">
    <conflict type="erroneous gene model prediction">
        <sequence resource="EMBL-CDS" id="AAG22724"/>
    </conflict>
</comment>
<comment type="sequence caution" evidence="11">
    <conflict type="erroneous gene model prediction">
        <sequence resource="EMBL-CDS" id="AAG22725"/>
    </conflict>
</comment>
<comment type="sequence caution" evidence="11">
    <conflict type="erroneous gene model prediction">
        <sequence resource="EMBL-CDS" id="AAG22726"/>
    </conflict>
</comment>
<comment type="sequence caution" evidence="11">
    <conflict type="erroneous gene model prediction">
        <sequence resource="EMBL-CDS" id="AAG22727"/>
    </conflict>
</comment>
<comment type="sequence caution" evidence="11">
    <conflict type="erroneous gene model prediction">
        <sequence resource="EMBL-CDS" id="AAG22728"/>
    </conflict>
</comment>
<comment type="sequence caution" evidence="11">
    <conflict type="erroneous gene model prediction">
        <sequence resource="EMBL-CDS" id="AAG22729"/>
    </conflict>
</comment>
<comment type="sequence caution" evidence="11">
    <conflict type="erroneous gene model prediction">
        <sequence resource="EMBL-CDS" id="AAG22730"/>
    </conflict>
</comment>
<comment type="sequence caution" evidence="11">
    <conflict type="erroneous gene model prediction">
        <sequence resource="EMBL-CDS" id="AAG22731"/>
    </conflict>
</comment>
<comment type="sequence caution" evidence="11">
    <conflict type="erroneous gene model prediction">
        <sequence resource="EMBL-CDS" id="AAG22732"/>
    </conflict>
</comment>
<comment type="sequence caution" evidence="11">
    <conflict type="erroneous gene model prediction">
        <sequence resource="EMBL-CDS" id="AAG22733"/>
    </conflict>
</comment>
<comment type="sequence caution" evidence="11">
    <conflict type="erroneous gene model prediction">
        <sequence resource="EMBL-CDS" id="AAG22734"/>
    </conflict>
</comment>
<comment type="sequence caution" evidence="11">
    <conflict type="erroneous gene model prediction">
        <sequence resource="EMBL-CDS" id="AAG22735"/>
    </conflict>
</comment>
<comment type="sequence caution" evidence="11">
    <conflict type="erroneous gene model prediction">
        <sequence resource="EMBL-CDS" id="AAG22736"/>
    </conflict>
</comment>
<comment type="sequence caution" evidence="11">
    <conflict type="erroneous gene model prediction">
        <sequence resource="EMBL-CDS" id="AAG22737"/>
    </conflict>
</comment>
<comment type="sequence caution" evidence="11">
    <conflict type="erroneous gene model prediction">
        <sequence resource="EMBL-CDS" id="AAG22738"/>
    </conflict>
</comment>
<organism>
    <name type="scientific">Drosophila melanogaster</name>
    <name type="common">Fruit fly</name>
    <dbReference type="NCBI Taxonomy" id="7227"/>
    <lineage>
        <taxon>Eukaryota</taxon>
        <taxon>Metazoa</taxon>
        <taxon>Ecdysozoa</taxon>
        <taxon>Arthropoda</taxon>
        <taxon>Hexapoda</taxon>
        <taxon>Insecta</taxon>
        <taxon>Pterygota</taxon>
        <taxon>Neoptera</taxon>
        <taxon>Endopterygota</taxon>
        <taxon>Diptera</taxon>
        <taxon>Brachycera</taxon>
        <taxon>Muscomorpha</taxon>
        <taxon>Ephydroidea</taxon>
        <taxon>Drosophilidae</taxon>
        <taxon>Drosophila</taxon>
        <taxon>Sophophora</taxon>
    </lineage>
</organism>
<feature type="signal peptide">
    <location>
        <begin position="1"/>
        <end position="24"/>
    </location>
</feature>
<feature type="chain" id="PRO_0000013020" description="G-protein coupled receptor Mth">
    <location>
        <begin position="25"/>
        <end position="514"/>
    </location>
</feature>
<feature type="topological domain" description="Extracellular" evidence="1">
    <location>
        <begin position="25"/>
        <end position="218"/>
    </location>
</feature>
<feature type="transmembrane region" description="Helical; Name=1" evidence="1">
    <location>
        <begin position="219"/>
        <end position="239"/>
    </location>
</feature>
<feature type="topological domain" description="Cytoplasmic" evidence="1">
    <location>
        <begin position="240"/>
        <end position="248"/>
    </location>
</feature>
<feature type="transmembrane region" description="Helical; Name=2" evidence="1">
    <location>
        <begin position="249"/>
        <end position="269"/>
    </location>
</feature>
<feature type="topological domain" description="Extracellular" evidence="1">
    <location>
        <begin position="270"/>
        <end position="278"/>
    </location>
</feature>
<feature type="transmembrane region" description="Helical; Name=3" evidence="1">
    <location>
        <begin position="279"/>
        <end position="299"/>
    </location>
</feature>
<feature type="topological domain" description="Cytoplasmic" evidence="1">
    <location>
        <begin position="300"/>
        <end position="320"/>
    </location>
</feature>
<feature type="transmembrane region" description="Helical; Name=4" evidence="1">
    <location>
        <begin position="321"/>
        <end position="341"/>
    </location>
</feature>
<feature type="topological domain" description="Extracellular" evidence="1">
    <location>
        <begin position="342"/>
        <end position="370"/>
    </location>
</feature>
<feature type="transmembrane region" description="Helical; Name=5" evidence="1">
    <location>
        <begin position="371"/>
        <end position="391"/>
    </location>
</feature>
<feature type="topological domain" description="Cytoplasmic" evidence="1">
    <location>
        <begin position="392"/>
        <end position="424"/>
    </location>
</feature>
<feature type="transmembrane region" description="Helical; Name=6" evidence="1">
    <location>
        <begin position="425"/>
        <end position="445"/>
    </location>
</feature>
<feature type="topological domain" description="Extracellular" evidence="1">
    <location>
        <begin position="446"/>
        <end position="454"/>
    </location>
</feature>
<feature type="transmembrane region" description="Helical; Name=7" evidence="1">
    <location>
        <begin position="455"/>
        <end position="475"/>
    </location>
</feature>
<feature type="topological domain" description="Cytoplasmic" evidence="1">
    <location>
        <begin position="476"/>
        <end position="514"/>
    </location>
</feature>
<feature type="glycosylation site" description="N-linked (GlcNAc...) asparagine" evidence="3 12">
    <location>
        <position position="45"/>
    </location>
</feature>
<feature type="glycosylation site" description="N-linked (GlcNAc...) asparagine" evidence="1">
    <location>
        <position position="109"/>
    </location>
</feature>
<feature type="glycosylation site" description="N-linked (GlcNAc...) asparagine" evidence="3 12">
    <location>
        <position position="123"/>
    </location>
</feature>
<feature type="glycosylation site" description="N-linked (GlcNAc...) asparagine" evidence="3 12">
    <location>
        <position position="170"/>
    </location>
</feature>
<feature type="glycosylation site" description="N-linked (GlcNAc...) asparagine" evidence="1">
    <location>
        <position position="198"/>
    </location>
</feature>
<feature type="glycosylation site" description="N-linked (GlcNAc...) asparagine" evidence="1">
    <location>
        <position position="449"/>
    </location>
</feature>
<feature type="disulfide bond" evidence="3 6 12 13">
    <location>
        <begin position="29"/>
        <end position="83"/>
    </location>
</feature>
<feature type="disulfide bond" evidence="3 6 12 13">
    <location>
        <begin position="85"/>
        <end position="90"/>
    </location>
</feature>
<feature type="disulfide bond" evidence="3 6 12 13">
    <location>
        <begin position="94"/>
        <end position="188"/>
    </location>
</feature>
<feature type="disulfide bond" evidence="3 6 12 13">
    <location>
        <begin position="95"/>
        <end position="106"/>
    </location>
</feature>
<feature type="disulfide bond" evidence="3 6 12 13">
    <location>
        <begin position="150"/>
        <end position="209"/>
    </location>
</feature>
<feature type="splice variant" id="VSP_002023" description="In isoform B." evidence="9 10">
    <original>SIRGEGEEVNNSEEEISLENTTTRNVLL</original>
    <variation>RNHPKSTRSVISNRSMASRITVGTTPKNKARNSPLA</variation>
    <location>
        <begin position="487"/>
        <end position="514"/>
    </location>
</feature>
<feature type="sequence variant" description="In strain: MA97_6." evidence="2">
    <original>L</original>
    <variation>I</variation>
    <location>
        <position position="54"/>
    </location>
</feature>
<feature type="sequence variant" description="In strain: ZIM(S)49 and ZIM(H)44." evidence="2">
    <original>S</original>
    <variation>A</variation>
    <location>
        <position position="132"/>
    </location>
</feature>
<feature type="sequence variant" description="In strain: CT97_3, MFL97_1 and ZIM(S)37." evidence="2">
    <original>D</original>
    <variation>N</variation>
    <location>
        <position position="151"/>
    </location>
</feature>
<feature type="sequence variant" description="In strain: ZIM(S)49 and ZIM(H)44." evidence="2">
    <original>F</original>
    <variation>V</variation>
    <location>
        <position position="281"/>
    </location>
</feature>
<feature type="sequence variant" description="In strain: DPF96_3.0, HFL97_15, JFL97_1, JFL97_9 and ZIM(S)37." evidence="2">
    <original>H</original>
    <variation>N</variation>
    <location>
        <position position="357"/>
    </location>
</feature>
<feature type="sequence variant" description="In strain: ZIM(S)35." evidence="2">
    <original>T</original>
    <variation>N</variation>
    <location>
        <position position="387"/>
    </location>
</feature>
<feature type="sequence variant" description="In strain: ZIM(H)23." evidence="2">
    <original>A</original>
    <variation>V</variation>
    <location>
        <position position="407"/>
    </location>
</feature>
<feature type="helix" evidence="14">
    <location>
        <begin position="31"/>
        <end position="33"/>
    </location>
</feature>
<feature type="strand" evidence="14">
    <location>
        <begin position="40"/>
        <end position="42"/>
    </location>
</feature>
<feature type="strand" evidence="14">
    <location>
        <begin position="48"/>
        <end position="50"/>
    </location>
</feature>
<feature type="strand" evidence="14">
    <location>
        <begin position="53"/>
        <end position="55"/>
    </location>
</feature>
<feature type="helix" evidence="14">
    <location>
        <begin position="57"/>
        <end position="59"/>
    </location>
</feature>
<feature type="strand" evidence="14">
    <location>
        <begin position="60"/>
        <end position="67"/>
    </location>
</feature>
<feature type="strand" evidence="14">
    <location>
        <begin position="73"/>
        <end position="82"/>
    </location>
</feature>
<feature type="helix" evidence="14">
    <location>
        <begin position="84"/>
        <end position="86"/>
    </location>
</feature>
<feature type="strand" evidence="14">
    <location>
        <begin position="90"/>
        <end position="95"/>
    </location>
</feature>
<feature type="strand" evidence="14">
    <location>
        <begin position="100"/>
        <end position="102"/>
    </location>
</feature>
<feature type="strand" evidence="14">
    <location>
        <begin position="105"/>
        <end position="107"/>
    </location>
</feature>
<feature type="helix" evidence="14">
    <location>
        <begin position="112"/>
        <end position="117"/>
    </location>
</feature>
<feature type="strand" evidence="14">
    <location>
        <begin position="121"/>
        <end position="125"/>
    </location>
</feature>
<feature type="strand" evidence="14">
    <location>
        <begin position="131"/>
        <end position="135"/>
    </location>
</feature>
<feature type="turn" evidence="14">
    <location>
        <begin position="136"/>
        <end position="139"/>
    </location>
</feature>
<feature type="strand" evidence="14">
    <location>
        <begin position="140"/>
        <end position="143"/>
    </location>
</feature>
<feature type="helix" evidence="14">
    <location>
        <begin position="161"/>
        <end position="163"/>
    </location>
</feature>
<feature type="strand" evidence="14">
    <location>
        <begin position="165"/>
        <end position="168"/>
    </location>
</feature>
<feature type="strand" evidence="14">
    <location>
        <begin position="173"/>
        <end position="175"/>
    </location>
</feature>
<feature type="turn" evidence="14">
    <location>
        <begin position="176"/>
        <end position="179"/>
    </location>
</feature>
<feature type="strand" evidence="14">
    <location>
        <begin position="180"/>
        <end position="182"/>
    </location>
</feature>
<feature type="strand" evidence="14">
    <location>
        <begin position="186"/>
        <end position="195"/>
    </location>
</feature>
<feature type="strand" evidence="14">
    <location>
        <begin position="197"/>
        <end position="208"/>
    </location>
</feature>
<dbReference type="EMBL" id="AF109308">
    <property type="protein sequence ID" value="AAD16981.1"/>
    <property type="molecule type" value="mRNA"/>
</dbReference>
<dbReference type="EMBL" id="AF280552">
    <property type="protein sequence ID" value="AAG22708.1"/>
    <property type="status" value="ALT_SEQ"/>
    <property type="molecule type" value="Genomic_DNA"/>
</dbReference>
<dbReference type="EMBL" id="AF280553">
    <property type="protein sequence ID" value="AAG22709.1"/>
    <property type="status" value="ALT_SEQ"/>
    <property type="molecule type" value="Genomic_DNA"/>
</dbReference>
<dbReference type="EMBL" id="AF280554">
    <property type="protein sequence ID" value="AAG22710.1"/>
    <property type="status" value="ALT_SEQ"/>
    <property type="molecule type" value="Genomic_DNA"/>
</dbReference>
<dbReference type="EMBL" id="AF280555">
    <property type="protein sequence ID" value="AAG22711.1"/>
    <property type="status" value="ALT_SEQ"/>
    <property type="molecule type" value="Genomic_DNA"/>
</dbReference>
<dbReference type="EMBL" id="AF280556">
    <property type="protein sequence ID" value="AAG22712.1"/>
    <property type="status" value="ALT_SEQ"/>
    <property type="molecule type" value="Genomic_DNA"/>
</dbReference>
<dbReference type="EMBL" id="AF280557">
    <property type="protein sequence ID" value="AAG22713.1"/>
    <property type="status" value="ALT_SEQ"/>
    <property type="molecule type" value="Genomic_DNA"/>
</dbReference>
<dbReference type="EMBL" id="AF280558">
    <property type="protein sequence ID" value="AAG22714.1"/>
    <property type="status" value="ALT_SEQ"/>
    <property type="molecule type" value="Genomic_DNA"/>
</dbReference>
<dbReference type="EMBL" id="AF280559">
    <property type="protein sequence ID" value="AAG22715.1"/>
    <property type="status" value="ALT_SEQ"/>
    <property type="molecule type" value="Genomic_DNA"/>
</dbReference>
<dbReference type="EMBL" id="AF280560">
    <property type="protein sequence ID" value="AAG22716.1"/>
    <property type="status" value="ALT_SEQ"/>
    <property type="molecule type" value="Genomic_DNA"/>
</dbReference>
<dbReference type="EMBL" id="AF280561">
    <property type="protein sequence ID" value="AAG22717.1"/>
    <property type="status" value="ALT_SEQ"/>
    <property type="molecule type" value="Genomic_DNA"/>
</dbReference>
<dbReference type="EMBL" id="AF280562">
    <property type="protein sequence ID" value="AAG22718.1"/>
    <property type="status" value="ALT_SEQ"/>
    <property type="molecule type" value="Genomic_DNA"/>
</dbReference>
<dbReference type="EMBL" id="AF280563">
    <property type="protein sequence ID" value="AAG22719.1"/>
    <property type="status" value="ALT_SEQ"/>
    <property type="molecule type" value="Genomic_DNA"/>
</dbReference>
<dbReference type="EMBL" id="AF280564">
    <property type="protein sequence ID" value="AAG22720.1"/>
    <property type="status" value="ALT_SEQ"/>
    <property type="molecule type" value="Genomic_DNA"/>
</dbReference>
<dbReference type="EMBL" id="AF280565">
    <property type="protein sequence ID" value="AAG22721.1"/>
    <property type="status" value="ALT_SEQ"/>
    <property type="molecule type" value="Genomic_DNA"/>
</dbReference>
<dbReference type="EMBL" id="AF280566">
    <property type="protein sequence ID" value="AAG22722.1"/>
    <property type="status" value="ALT_SEQ"/>
    <property type="molecule type" value="Genomic_DNA"/>
</dbReference>
<dbReference type="EMBL" id="AF280567">
    <property type="protein sequence ID" value="AAG22723.1"/>
    <property type="status" value="ALT_SEQ"/>
    <property type="molecule type" value="Genomic_DNA"/>
</dbReference>
<dbReference type="EMBL" id="AF280568">
    <property type="protein sequence ID" value="AAG22724.1"/>
    <property type="status" value="ALT_SEQ"/>
    <property type="molecule type" value="Genomic_DNA"/>
</dbReference>
<dbReference type="EMBL" id="AF280569">
    <property type="protein sequence ID" value="AAG22725.1"/>
    <property type="status" value="ALT_SEQ"/>
    <property type="molecule type" value="Genomic_DNA"/>
</dbReference>
<dbReference type="EMBL" id="AF280570">
    <property type="protein sequence ID" value="AAG22726.1"/>
    <property type="status" value="ALT_SEQ"/>
    <property type="molecule type" value="Genomic_DNA"/>
</dbReference>
<dbReference type="EMBL" id="AF280571">
    <property type="protein sequence ID" value="AAG22727.1"/>
    <property type="status" value="ALT_SEQ"/>
    <property type="molecule type" value="Genomic_DNA"/>
</dbReference>
<dbReference type="EMBL" id="AF280572">
    <property type="protein sequence ID" value="AAG22728.1"/>
    <property type="status" value="ALT_SEQ"/>
    <property type="molecule type" value="Genomic_DNA"/>
</dbReference>
<dbReference type="EMBL" id="AF280573">
    <property type="protein sequence ID" value="AAG22729.1"/>
    <property type="status" value="ALT_SEQ"/>
    <property type="molecule type" value="Genomic_DNA"/>
</dbReference>
<dbReference type="EMBL" id="AF280574">
    <property type="protein sequence ID" value="AAG22730.1"/>
    <property type="status" value="ALT_SEQ"/>
    <property type="molecule type" value="Genomic_DNA"/>
</dbReference>
<dbReference type="EMBL" id="AF280575">
    <property type="protein sequence ID" value="AAG22731.1"/>
    <property type="status" value="ALT_SEQ"/>
    <property type="molecule type" value="Genomic_DNA"/>
</dbReference>
<dbReference type="EMBL" id="AF280576">
    <property type="protein sequence ID" value="AAG22732.1"/>
    <property type="status" value="ALT_SEQ"/>
    <property type="molecule type" value="Genomic_DNA"/>
</dbReference>
<dbReference type="EMBL" id="AF280577">
    <property type="protein sequence ID" value="AAG22733.1"/>
    <property type="status" value="ALT_SEQ"/>
    <property type="molecule type" value="Genomic_DNA"/>
</dbReference>
<dbReference type="EMBL" id="AF280578">
    <property type="protein sequence ID" value="AAG22734.1"/>
    <property type="status" value="ALT_SEQ"/>
    <property type="molecule type" value="Genomic_DNA"/>
</dbReference>
<dbReference type="EMBL" id="AF280579">
    <property type="protein sequence ID" value="AAG22735.1"/>
    <property type="status" value="ALT_SEQ"/>
    <property type="molecule type" value="Genomic_DNA"/>
</dbReference>
<dbReference type="EMBL" id="AF280580">
    <property type="protein sequence ID" value="AAG22736.1"/>
    <property type="status" value="ALT_SEQ"/>
    <property type="molecule type" value="Genomic_DNA"/>
</dbReference>
<dbReference type="EMBL" id="AF280581">
    <property type="protein sequence ID" value="AAG22737.1"/>
    <property type="status" value="ALT_SEQ"/>
    <property type="molecule type" value="Genomic_DNA"/>
</dbReference>
<dbReference type="EMBL" id="AF280582">
    <property type="protein sequence ID" value="AAG22738.1"/>
    <property type="status" value="ALT_SEQ"/>
    <property type="molecule type" value="Genomic_DNA"/>
</dbReference>
<dbReference type="EMBL" id="AE014296">
    <property type="protein sequence ID" value="AAF47379.2"/>
    <property type="molecule type" value="Genomic_DNA"/>
</dbReference>
<dbReference type="EMBL" id="AE014296">
    <property type="protein sequence ID" value="AAN11440.1"/>
    <property type="molecule type" value="Genomic_DNA"/>
</dbReference>
<dbReference type="EMBL" id="AY052111">
    <property type="protein sequence ID" value="AAK93535.1"/>
    <property type="molecule type" value="mRNA"/>
</dbReference>
<dbReference type="EMBL" id="BT044433">
    <property type="protein sequence ID" value="ACH92498.1"/>
    <property type="molecule type" value="mRNA"/>
</dbReference>
<dbReference type="RefSeq" id="NP_001246535.1">
    <molecule id="O97148-1"/>
    <property type="nucleotide sequence ID" value="NM_001259606.2"/>
</dbReference>
<dbReference type="RefSeq" id="NP_523871.1">
    <molecule id="O97148-1"/>
    <property type="nucleotide sequence ID" value="NM_079147.4"/>
</dbReference>
<dbReference type="RefSeq" id="NP_728521.1">
    <molecule id="O97148-2"/>
    <property type="nucleotide sequence ID" value="NM_167829.3"/>
</dbReference>
<dbReference type="PDB" id="1FJR">
    <property type="method" value="X-ray"/>
    <property type="resolution" value="2.30 A"/>
    <property type="chains" value="A/B=25-219"/>
</dbReference>
<dbReference type="PDB" id="2PZX">
    <property type="method" value="X-ray"/>
    <property type="resolution" value="3.50 A"/>
    <property type="chains" value="A/B/C/D=25-212"/>
</dbReference>
<dbReference type="PDBsum" id="1FJR"/>
<dbReference type="PDBsum" id="2PZX"/>
<dbReference type="SMR" id="O97148"/>
<dbReference type="BioGRID" id="63614">
    <property type="interactions" value="1"/>
</dbReference>
<dbReference type="FunCoup" id="O97148">
    <property type="interactions" value="53"/>
</dbReference>
<dbReference type="STRING" id="7227.FBpp0072470"/>
<dbReference type="BindingDB" id="O97148"/>
<dbReference type="ChEMBL" id="CHEMBL3309000"/>
<dbReference type="TCDB" id="9.A.14.14.2">
    <property type="family name" value="the g-protein-coupled receptor (gpcr) family"/>
</dbReference>
<dbReference type="GlyCosmos" id="O97148">
    <property type="glycosylation" value="6 sites, No reported glycans"/>
</dbReference>
<dbReference type="GlyGen" id="O97148">
    <property type="glycosylation" value="6 sites"/>
</dbReference>
<dbReference type="iPTMnet" id="O97148"/>
<dbReference type="PaxDb" id="7227-FBpp0072470"/>
<dbReference type="DNASU" id="38058"/>
<dbReference type="EnsemblMetazoa" id="FBtr0072570">
    <molecule id="O97148-1"/>
    <property type="protein sequence ID" value="FBpp0072469"/>
    <property type="gene ID" value="FBgn0023000"/>
</dbReference>
<dbReference type="EnsemblMetazoa" id="FBtr0072571">
    <molecule id="O97148-2"/>
    <property type="protein sequence ID" value="FBpp0072470"/>
    <property type="gene ID" value="FBgn0023000"/>
</dbReference>
<dbReference type="EnsemblMetazoa" id="FBtr0306850">
    <molecule id="O97148-1"/>
    <property type="protein sequence ID" value="FBpp0297746"/>
    <property type="gene ID" value="FBgn0023000"/>
</dbReference>
<dbReference type="GeneID" id="38058"/>
<dbReference type="KEGG" id="dme:Dmel_CG6936"/>
<dbReference type="UCSC" id="CG6936-RA">
    <molecule id="O97148-1"/>
    <property type="organism name" value="d. melanogaster"/>
</dbReference>
<dbReference type="AGR" id="FB:FBgn0023000"/>
<dbReference type="CTD" id="38058"/>
<dbReference type="FlyBase" id="FBgn0023000">
    <property type="gene designation" value="mth"/>
</dbReference>
<dbReference type="VEuPathDB" id="VectorBase:FBgn0023000"/>
<dbReference type="eggNOG" id="KOG4193">
    <property type="taxonomic scope" value="Eukaryota"/>
</dbReference>
<dbReference type="GeneTree" id="ENSGT00940000168274"/>
<dbReference type="HOGENOM" id="CLU_002753_3_0_1"/>
<dbReference type="InParanoid" id="O97148"/>
<dbReference type="OMA" id="DFCITAG"/>
<dbReference type="OrthoDB" id="6134459at2759"/>
<dbReference type="PhylomeDB" id="O97148"/>
<dbReference type="BioGRID-ORCS" id="38058">
    <property type="hits" value="1 hit in 1 CRISPR screen"/>
</dbReference>
<dbReference type="EvolutionaryTrace" id="O97148"/>
<dbReference type="GenomeRNAi" id="38058"/>
<dbReference type="PRO" id="PR:O97148"/>
<dbReference type="Proteomes" id="UP000000803">
    <property type="component" value="Chromosome 3L"/>
</dbReference>
<dbReference type="Bgee" id="FBgn0023000">
    <property type="expression patterns" value="Expressed in embryonic/larval hemocyte (Drosophila) and 99 other cell types or tissues"/>
</dbReference>
<dbReference type="ExpressionAtlas" id="O97148">
    <property type="expression patterns" value="baseline and differential"/>
</dbReference>
<dbReference type="GO" id="GO:0016020">
    <property type="term" value="C:membrane"/>
    <property type="evidence" value="ECO:0000304"/>
    <property type="project" value="UniProtKB"/>
</dbReference>
<dbReference type="GO" id="GO:0005886">
    <property type="term" value="C:plasma membrane"/>
    <property type="evidence" value="ECO:0000314"/>
    <property type="project" value="FlyBase"/>
</dbReference>
<dbReference type="GO" id="GO:0098793">
    <property type="term" value="C:presynapse"/>
    <property type="evidence" value="ECO:0007669"/>
    <property type="project" value="GOC"/>
</dbReference>
<dbReference type="GO" id="GO:0008528">
    <property type="term" value="F:G protein-coupled peptide receptor activity"/>
    <property type="evidence" value="ECO:0000353"/>
    <property type="project" value="FlyBase"/>
</dbReference>
<dbReference type="GO" id="GO:0004930">
    <property type="term" value="F:G protein-coupled receptor activity"/>
    <property type="evidence" value="ECO:0000314"/>
    <property type="project" value="FlyBase"/>
</dbReference>
<dbReference type="GO" id="GO:0042277">
    <property type="term" value="F:peptide binding"/>
    <property type="evidence" value="ECO:0000353"/>
    <property type="project" value="FlyBase"/>
</dbReference>
<dbReference type="GO" id="GO:0007166">
    <property type="term" value="P:cell surface receptor signaling pathway"/>
    <property type="evidence" value="ECO:0007669"/>
    <property type="project" value="InterPro"/>
</dbReference>
<dbReference type="GO" id="GO:0008340">
    <property type="term" value="P:determination of adult lifespan"/>
    <property type="evidence" value="ECO:0000314"/>
    <property type="project" value="FlyBase"/>
</dbReference>
<dbReference type="GO" id="GO:0007186">
    <property type="term" value="P:G protein-coupled receptor signaling pathway"/>
    <property type="evidence" value="ECO:0000314"/>
    <property type="project" value="FlyBase"/>
</dbReference>
<dbReference type="GO" id="GO:0009408">
    <property type="term" value="P:response to heat"/>
    <property type="evidence" value="ECO:0000315"/>
    <property type="project" value="UniProtKB"/>
</dbReference>
<dbReference type="GO" id="GO:1901562">
    <property type="term" value="P:response to paraquat"/>
    <property type="evidence" value="ECO:0000315"/>
    <property type="project" value="FlyBase"/>
</dbReference>
<dbReference type="GO" id="GO:0000302">
    <property type="term" value="P:response to reactive oxygen species"/>
    <property type="evidence" value="ECO:0000315"/>
    <property type="project" value="UniProtKB"/>
</dbReference>
<dbReference type="GO" id="GO:0042594">
    <property type="term" value="P:response to starvation"/>
    <property type="evidence" value="ECO:0000315"/>
    <property type="project" value="UniProtKB"/>
</dbReference>
<dbReference type="GO" id="GO:0016079">
    <property type="term" value="P:synaptic vesicle exocytosis"/>
    <property type="evidence" value="ECO:0000315"/>
    <property type="project" value="FlyBase"/>
</dbReference>
<dbReference type="CDD" id="cd15039">
    <property type="entry name" value="7tmB3_Methuselah-like"/>
    <property type="match status" value="1"/>
</dbReference>
<dbReference type="CDD" id="cd00251">
    <property type="entry name" value="Mth_Ecto"/>
    <property type="match status" value="1"/>
</dbReference>
<dbReference type="FunFam" id="1.20.1070.10:FF:000297">
    <property type="entry name" value="G-protein coupled receptor Mth"/>
    <property type="match status" value="1"/>
</dbReference>
<dbReference type="FunFam" id="2.170.180.11:FF:000001">
    <property type="entry name" value="G-protein coupled receptor Mth"/>
    <property type="match status" value="1"/>
</dbReference>
<dbReference type="FunFam" id="2.30.160.11:FF:000001">
    <property type="entry name" value="G-protein coupled receptor Mth"/>
    <property type="match status" value="1"/>
</dbReference>
<dbReference type="Gene3D" id="2.30.160.11">
    <property type="match status" value="1"/>
</dbReference>
<dbReference type="Gene3D" id="2.170.180.11">
    <property type="entry name" value="Methuselah ectodomain, domain 2"/>
    <property type="match status" value="1"/>
</dbReference>
<dbReference type="Gene3D" id="1.20.1070.10">
    <property type="entry name" value="Rhodopsin 7-helix transmembrane proteins"/>
    <property type="match status" value="1"/>
</dbReference>
<dbReference type="InterPro" id="IPR017981">
    <property type="entry name" value="GPCR_2-like_7TM"/>
</dbReference>
<dbReference type="InterPro" id="IPR000832">
    <property type="entry name" value="GPCR_2_secretin-like"/>
</dbReference>
<dbReference type="InterPro" id="IPR044860">
    <property type="entry name" value="Methusela_ecto_dom_1"/>
</dbReference>
<dbReference type="InterPro" id="IPR023311">
    <property type="entry name" value="Methusela_ecto_dom_2"/>
</dbReference>
<dbReference type="InterPro" id="IPR010596">
    <property type="entry name" value="Methuselah_N_dom"/>
</dbReference>
<dbReference type="InterPro" id="IPR036272">
    <property type="entry name" value="Methuselah_N_sf"/>
</dbReference>
<dbReference type="InterPro" id="IPR051384">
    <property type="entry name" value="Mth_GPCR"/>
</dbReference>
<dbReference type="PANTHER" id="PTHR47154">
    <property type="entry name" value="G-PROTEIN COUPLED RECEPTOR MTH-RELATED"/>
    <property type="match status" value="1"/>
</dbReference>
<dbReference type="PANTHER" id="PTHR47154:SF2">
    <property type="entry name" value="G-PROTEIN COUPLED RECEPTOR MTH-RELATED"/>
    <property type="match status" value="1"/>
</dbReference>
<dbReference type="Pfam" id="PF00002">
    <property type="entry name" value="7tm_2"/>
    <property type="match status" value="1"/>
</dbReference>
<dbReference type="Pfam" id="PF06652">
    <property type="entry name" value="Methuselah_N"/>
    <property type="match status" value="1"/>
</dbReference>
<dbReference type="SUPFAM" id="SSF81321">
    <property type="entry name" value="Family A G protein-coupled receptor-like"/>
    <property type="match status" value="1"/>
</dbReference>
<dbReference type="SUPFAM" id="SSF63877">
    <property type="entry name" value="Methuselah ectodomain"/>
    <property type="match status" value="1"/>
</dbReference>
<dbReference type="PROSITE" id="PS50261">
    <property type="entry name" value="G_PROTEIN_RECEP_F2_4"/>
    <property type="match status" value="1"/>
</dbReference>
<keyword id="KW-0002">3D-structure</keyword>
<keyword id="KW-0025">Alternative splicing</keyword>
<keyword id="KW-1003">Cell membrane</keyword>
<keyword id="KW-1015">Disulfide bond</keyword>
<keyword id="KW-0268">Exocytosis</keyword>
<keyword id="KW-0297">G-protein coupled receptor</keyword>
<keyword id="KW-0325">Glycoprotein</keyword>
<keyword id="KW-0472">Membrane</keyword>
<keyword id="KW-0532">Neurotransmitter transport</keyword>
<keyword id="KW-0675">Receptor</keyword>
<keyword id="KW-1185">Reference proteome</keyword>
<keyword id="KW-0732">Signal</keyword>
<keyword id="KW-0807">Transducer</keyword>
<keyword id="KW-0812">Transmembrane</keyword>
<keyword id="KW-1133">Transmembrane helix</keyword>
<keyword id="KW-0813">Transport</keyword>
<evidence type="ECO:0000255" key="1"/>
<evidence type="ECO:0000269" key="2">
    <source>
    </source>
</evidence>
<evidence type="ECO:0000269" key="3">
    <source>
    </source>
</evidence>
<evidence type="ECO:0000269" key="4">
    <source>
    </source>
</evidence>
<evidence type="ECO:0000269" key="5">
    <source>
    </source>
</evidence>
<evidence type="ECO:0000269" key="6">
    <source>
    </source>
</evidence>
<evidence type="ECO:0000269" key="7">
    <source>
    </source>
</evidence>
<evidence type="ECO:0000269" key="8">
    <source>
    </source>
</evidence>
<evidence type="ECO:0000303" key="9">
    <source>
    </source>
</evidence>
<evidence type="ECO:0000303" key="10">
    <source ref="6"/>
</evidence>
<evidence type="ECO:0000305" key="11"/>
<evidence type="ECO:0007744" key="12">
    <source>
        <dbReference type="PDB" id="1FJR"/>
    </source>
</evidence>
<evidence type="ECO:0007744" key="13">
    <source>
        <dbReference type="PDB" id="2PZX"/>
    </source>
</evidence>
<evidence type="ECO:0007829" key="14">
    <source>
        <dbReference type="PDB" id="1FJR"/>
    </source>
</evidence>
<accession>O97148</accession>
<accession>B5RJF9</accession>
<accession>Q9GN21</accession>
<accession>Q9GN78</accession>
<accession>Q9GND6</accession>
<accession>Q9GNE8</accession>
<accession>Q9GT57</accession>
<accession>Q9GT58</accession>
<accession>Q9GT59</accession>
<accession>Q9GT60</accession>
<accession>Q9W0R4</accession>
<gene>
    <name type="primary">mth</name>
    <name type="ORF">CG6936</name>
</gene>
<reference key="1">
    <citation type="journal article" date="1998" name="Science">
        <title>Extended life-span and stress resistance in the Drosophila mutant methuselah.</title>
        <authorList>
            <person name="Lin Y.-J."/>
            <person name="Seroude L."/>
            <person name="Benzer S."/>
        </authorList>
    </citation>
    <scope>NUCLEOTIDE SEQUENCE [MRNA] (ISOFORM A)</scope>
    <scope>FUNCTION</scope>
    <scope>DISRUPTION PHENOTYPE</scope>
    <source>
        <strain>Canton-S</strain>
        <tissue>Embryo</tissue>
    </source>
</reference>
<reference key="2">
    <citation type="journal article" date="2000" name="Proc. Natl. Acad. Sci. U.S.A.">
        <title>Adaptive evolution of a candidate gene for aging in Drosophila.</title>
        <authorList>
            <person name="Schmidt P.S."/>
            <person name="Duvernell D.D."/>
            <person name="Eanes W.F."/>
        </authorList>
    </citation>
    <scope>NUCLEOTIDE SEQUENCE [GENOMIC DNA] (ISOFORM A)</scope>
    <scope>VARIANTS ILE-54; ALA-132; ASN-151; VAL-281; ASN-357; ASN-387 AND VAL-407</scope>
    <source>
        <strain>CT97_1</strain>
        <strain>CT97_3</strain>
        <strain>CT97_4</strain>
        <strain>DPF96_3.0</strain>
        <strain>DPF96_74.2</strain>
        <strain>HFL97_12</strain>
        <strain>HFL97_15</strain>
        <strain>HFL97_16</strain>
        <strain>HFL97_8</strain>
        <strain>JFL97_1</strain>
        <strain>JFL97_5</strain>
        <strain>JFL97_9</strain>
        <strain>MA97_1</strain>
        <strain>MA97_4</strain>
        <strain>MA97_6</strain>
        <strain>MFL97_1</strain>
        <strain>MFL97_3</strain>
        <strain>MFL97_6</strain>
        <strain>SC96_19.4</strain>
        <strain>VT97_1</strain>
        <strain>VT97_39</strain>
        <strain>VT97_41</strain>
        <strain>ZIM(H)23</strain>
        <strain>ZIM(H)26</strain>
        <strain>ZIM(H)39</strain>
        <strain>ZIM(H)44</strain>
        <strain>ZIM(S)15</strain>
        <strain>ZIM(S)24</strain>
        <strain>ZIM(S)35</strain>
        <strain>ZIM(S)37</strain>
        <strain>ZIM(S)49</strain>
    </source>
</reference>
<reference key="3">
    <citation type="journal article" date="2000" name="Science">
        <title>The genome sequence of Drosophila melanogaster.</title>
        <authorList>
            <person name="Adams M.D."/>
            <person name="Celniker S.E."/>
            <person name="Holt R.A."/>
            <person name="Evans C.A."/>
            <person name="Gocayne J.D."/>
            <person name="Amanatides P.G."/>
            <person name="Scherer S.E."/>
            <person name="Li P.W."/>
            <person name="Hoskins R.A."/>
            <person name="Galle R.F."/>
            <person name="George R.A."/>
            <person name="Lewis S.E."/>
            <person name="Richards S."/>
            <person name="Ashburner M."/>
            <person name="Henderson S.N."/>
            <person name="Sutton G.G."/>
            <person name="Wortman J.R."/>
            <person name="Yandell M.D."/>
            <person name="Zhang Q."/>
            <person name="Chen L.X."/>
            <person name="Brandon R.C."/>
            <person name="Rogers Y.-H.C."/>
            <person name="Blazej R.G."/>
            <person name="Champe M."/>
            <person name="Pfeiffer B.D."/>
            <person name="Wan K.H."/>
            <person name="Doyle C."/>
            <person name="Baxter E.G."/>
            <person name="Helt G."/>
            <person name="Nelson C.R."/>
            <person name="Miklos G.L.G."/>
            <person name="Abril J.F."/>
            <person name="Agbayani A."/>
            <person name="An H.-J."/>
            <person name="Andrews-Pfannkoch C."/>
            <person name="Baldwin D."/>
            <person name="Ballew R.M."/>
            <person name="Basu A."/>
            <person name="Baxendale J."/>
            <person name="Bayraktaroglu L."/>
            <person name="Beasley E.M."/>
            <person name="Beeson K.Y."/>
            <person name="Benos P.V."/>
            <person name="Berman B.P."/>
            <person name="Bhandari D."/>
            <person name="Bolshakov S."/>
            <person name="Borkova D."/>
            <person name="Botchan M.R."/>
            <person name="Bouck J."/>
            <person name="Brokstein P."/>
            <person name="Brottier P."/>
            <person name="Burtis K.C."/>
            <person name="Busam D.A."/>
            <person name="Butler H."/>
            <person name="Cadieu E."/>
            <person name="Center A."/>
            <person name="Chandra I."/>
            <person name="Cherry J.M."/>
            <person name="Cawley S."/>
            <person name="Dahlke C."/>
            <person name="Davenport L.B."/>
            <person name="Davies P."/>
            <person name="de Pablos B."/>
            <person name="Delcher A."/>
            <person name="Deng Z."/>
            <person name="Mays A.D."/>
            <person name="Dew I."/>
            <person name="Dietz S.M."/>
            <person name="Dodson K."/>
            <person name="Doup L.E."/>
            <person name="Downes M."/>
            <person name="Dugan-Rocha S."/>
            <person name="Dunkov B.C."/>
            <person name="Dunn P."/>
            <person name="Durbin K.J."/>
            <person name="Evangelista C.C."/>
            <person name="Ferraz C."/>
            <person name="Ferriera S."/>
            <person name="Fleischmann W."/>
            <person name="Fosler C."/>
            <person name="Gabrielian A.E."/>
            <person name="Garg N.S."/>
            <person name="Gelbart W.M."/>
            <person name="Glasser K."/>
            <person name="Glodek A."/>
            <person name="Gong F."/>
            <person name="Gorrell J.H."/>
            <person name="Gu Z."/>
            <person name="Guan P."/>
            <person name="Harris M."/>
            <person name="Harris N.L."/>
            <person name="Harvey D.A."/>
            <person name="Heiman T.J."/>
            <person name="Hernandez J.R."/>
            <person name="Houck J."/>
            <person name="Hostin D."/>
            <person name="Houston K.A."/>
            <person name="Howland T.J."/>
            <person name="Wei M.-H."/>
            <person name="Ibegwam C."/>
            <person name="Jalali M."/>
            <person name="Kalush F."/>
            <person name="Karpen G.H."/>
            <person name="Ke Z."/>
            <person name="Kennison J.A."/>
            <person name="Ketchum K.A."/>
            <person name="Kimmel B.E."/>
            <person name="Kodira C.D."/>
            <person name="Kraft C.L."/>
            <person name="Kravitz S."/>
            <person name="Kulp D."/>
            <person name="Lai Z."/>
            <person name="Lasko P."/>
            <person name="Lei Y."/>
            <person name="Levitsky A.A."/>
            <person name="Li J.H."/>
            <person name="Li Z."/>
            <person name="Liang Y."/>
            <person name="Lin X."/>
            <person name="Liu X."/>
            <person name="Mattei B."/>
            <person name="McIntosh T.C."/>
            <person name="McLeod M.P."/>
            <person name="McPherson D."/>
            <person name="Merkulov G."/>
            <person name="Milshina N.V."/>
            <person name="Mobarry C."/>
            <person name="Morris J."/>
            <person name="Moshrefi A."/>
            <person name="Mount S.M."/>
            <person name="Moy M."/>
            <person name="Murphy B."/>
            <person name="Murphy L."/>
            <person name="Muzny D.M."/>
            <person name="Nelson D.L."/>
            <person name="Nelson D.R."/>
            <person name="Nelson K.A."/>
            <person name="Nixon K."/>
            <person name="Nusskern D.R."/>
            <person name="Pacleb J.M."/>
            <person name="Palazzolo M."/>
            <person name="Pittman G.S."/>
            <person name="Pan S."/>
            <person name="Pollard J."/>
            <person name="Puri V."/>
            <person name="Reese M.G."/>
            <person name="Reinert K."/>
            <person name="Remington K."/>
            <person name="Saunders R.D.C."/>
            <person name="Scheeler F."/>
            <person name="Shen H."/>
            <person name="Shue B.C."/>
            <person name="Siden-Kiamos I."/>
            <person name="Simpson M."/>
            <person name="Skupski M.P."/>
            <person name="Smith T.J."/>
            <person name="Spier E."/>
            <person name="Spradling A.C."/>
            <person name="Stapleton M."/>
            <person name="Strong R."/>
            <person name="Sun E."/>
            <person name="Svirskas R."/>
            <person name="Tector C."/>
            <person name="Turner R."/>
            <person name="Venter E."/>
            <person name="Wang A.H."/>
            <person name="Wang X."/>
            <person name="Wang Z.-Y."/>
            <person name="Wassarman D.A."/>
            <person name="Weinstock G.M."/>
            <person name="Weissenbach J."/>
            <person name="Williams S.M."/>
            <person name="Woodage T."/>
            <person name="Worley K.C."/>
            <person name="Wu D."/>
            <person name="Yang S."/>
            <person name="Yao Q.A."/>
            <person name="Ye J."/>
            <person name="Yeh R.-F."/>
            <person name="Zaveri J.S."/>
            <person name="Zhan M."/>
            <person name="Zhang G."/>
            <person name="Zhao Q."/>
            <person name="Zheng L."/>
            <person name="Zheng X.H."/>
            <person name="Zhong F.N."/>
            <person name="Zhong W."/>
            <person name="Zhou X."/>
            <person name="Zhu S.C."/>
            <person name="Zhu X."/>
            <person name="Smith H.O."/>
            <person name="Gibbs R.A."/>
            <person name="Myers E.W."/>
            <person name="Rubin G.M."/>
            <person name="Venter J.C."/>
        </authorList>
    </citation>
    <scope>NUCLEOTIDE SEQUENCE [LARGE SCALE GENOMIC DNA]</scope>
    <source>
        <strain>Berkeley</strain>
    </source>
</reference>
<reference key="4">
    <citation type="journal article" date="2002" name="Genome Biol.">
        <title>Annotation of the Drosophila melanogaster euchromatic genome: a systematic review.</title>
        <authorList>
            <person name="Misra S."/>
            <person name="Crosby M.A."/>
            <person name="Mungall C.J."/>
            <person name="Matthews B.B."/>
            <person name="Campbell K.S."/>
            <person name="Hradecky P."/>
            <person name="Huang Y."/>
            <person name="Kaminker J.S."/>
            <person name="Millburn G.H."/>
            <person name="Prochnik S.E."/>
            <person name="Smith C.D."/>
            <person name="Tupy J.L."/>
            <person name="Whitfield E.J."/>
            <person name="Bayraktaroglu L."/>
            <person name="Berman B.P."/>
            <person name="Bettencourt B.R."/>
            <person name="Celniker S.E."/>
            <person name="de Grey A.D.N.J."/>
            <person name="Drysdale R.A."/>
            <person name="Harris N.L."/>
            <person name="Richter J."/>
            <person name="Russo S."/>
            <person name="Schroeder A.J."/>
            <person name="Shu S.Q."/>
            <person name="Stapleton M."/>
            <person name="Yamada C."/>
            <person name="Ashburner M."/>
            <person name="Gelbart W.M."/>
            <person name="Rubin G.M."/>
            <person name="Lewis S.E."/>
        </authorList>
    </citation>
    <scope>GENOME REANNOTATION</scope>
    <scope>ALTERNATIVE SPLICING</scope>
    <source>
        <strain>Berkeley</strain>
    </source>
</reference>
<reference key="5">
    <citation type="journal article" date="2002" name="Genome Biol.">
        <title>A Drosophila full-length cDNA resource.</title>
        <authorList>
            <person name="Stapleton M."/>
            <person name="Carlson J.W."/>
            <person name="Brokstein P."/>
            <person name="Yu C."/>
            <person name="Champe M."/>
            <person name="George R.A."/>
            <person name="Guarin H."/>
            <person name="Kronmiller B."/>
            <person name="Pacleb J.M."/>
            <person name="Park S."/>
            <person name="Wan K.H."/>
            <person name="Rubin G.M."/>
            <person name="Celniker S.E."/>
        </authorList>
    </citation>
    <scope>NUCLEOTIDE SEQUENCE [LARGE SCALE MRNA] (ISOFORM B)</scope>
    <source>
        <strain>Berkeley</strain>
        <tissue>Embryo</tissue>
    </source>
</reference>
<reference key="6">
    <citation type="submission" date="2008-09" db="EMBL/GenBank/DDBJ databases">
        <authorList>
            <person name="Carlson J.W."/>
            <person name="Booth B."/>
            <person name="Frise E."/>
            <person name="Park S."/>
            <person name="Wan K.H."/>
            <person name="Yu C."/>
            <person name="Celniker S.E."/>
        </authorList>
    </citation>
    <scope>NUCLEOTIDE SEQUENCE [LARGE SCALE MRNA] (ISOFORM B)</scope>
    <source>
        <strain>Berkeley</strain>
    </source>
</reference>
<reference key="7">
    <citation type="journal article" date="2002" name="Neuron">
        <title>Presynaptic regulation of neurotransmission in Drosophila by the G protein-coupled receptor methuselah.</title>
        <authorList>
            <person name="Song W."/>
            <person name="Ranjan R."/>
            <person name="Dawson-Scully K."/>
            <person name="Bronk P."/>
            <person name="Marin L."/>
            <person name="Seroude L."/>
            <person name="Lin Y.J."/>
            <person name="Nie Z."/>
            <person name="Atwood H.L."/>
            <person name="Benzer S."/>
            <person name="Zinsmaier K.E."/>
        </authorList>
    </citation>
    <scope>FUNCTION</scope>
    <scope>SUBCELLULAR LOCATION</scope>
</reference>
<reference key="8">
    <citation type="journal article" date="2004" name="Nat. Cell Biol.">
        <title>The endogenous ligand Stunted of the GPCR Methuselah extends lifespan in Drosophila.</title>
        <authorList>
            <person name="Cvejic S."/>
            <person name="Zhu Z."/>
            <person name="Felice S.J."/>
            <person name="Berman Y."/>
            <person name="Huang X.Y."/>
        </authorList>
    </citation>
    <scope>FUNCTION</scope>
</reference>
<reference key="9">
    <citation type="journal article" date="2009" name="Protein Sci.">
        <title>The Drosophila G protein-coupled receptor, Methuselah, exhibits a promiscuous response to peptides.</title>
        <authorList>
            <person name="Ja W.W."/>
            <person name="Carvalho G.B."/>
            <person name="Madrigal M."/>
            <person name="Roberts R.W."/>
            <person name="Benzer S."/>
        </authorList>
    </citation>
    <scope>FUNCTION</scope>
</reference>
<reference key="10">
    <citation type="journal article" date="2001" name="Proc. Natl. Acad. Sci. U.S.A.">
        <title>Crystal structure of the ectodomain of Methuselah, a Drosophila G protein-coupled receptor associated with extended lifespan.</title>
        <authorList>
            <person name="West A.P. Jr."/>
            <person name="Llamas L.L."/>
            <person name="Snow P.M."/>
            <person name="Benzer S."/>
            <person name="Bjorkman P.J."/>
        </authorList>
    </citation>
    <scope>X-RAY CRYSTALLOGRAPHY (2.3 ANGSTROMS) OF 25-219</scope>
    <scope>DISULFIDE BOND</scope>
</reference>
<reference key="11">
    <citation type="journal article" date="2007" name="Nat. Chem. Biol.">
        <title>Extension of Drosophila melanogaster life span with a GPCR peptide inhibitor.</title>
        <authorList>
            <person name="Ja W.W."/>
            <person name="West A.P. Jr."/>
            <person name="Delker S.L."/>
            <person name="Bjorkman P.J."/>
            <person name="Benzer S."/>
            <person name="Roberts R.W."/>
        </authorList>
    </citation>
    <scope>X-RAY CRYSTALLOGRAPHY (3.5 ANGSTROMS) OF 25-212 IN COMPLEX WITH SYNTHETIC RWR MOTIF CONTAINING PEPTIDES</scope>
    <scope>GLYCOSYLATION AT ASN-45; ASN-123 AND ASN-170</scope>
    <scope>DISULFIDE BOND</scope>
</reference>
<proteinExistence type="evidence at protein level"/>
<name>MTH_DROME</name>